<evidence type="ECO:0000255" key="1">
    <source>
        <dbReference type="HAMAP-Rule" id="MF_00315"/>
    </source>
</evidence>
<sequence>MQNYPLLSLINSPEDLRLLNKDQLPQVCNELREYLLESVSRTSGHLASGLGTVELTVALHYIFKTPFDQLIWDVGHQAYPHKILTGRRERMTTIRQKDGIHPFPWREESEFDVLSVGHSSTSISAGLGIAIAAEKENAGRKIICVIGDGAITAGMAFEAMNHAGALHTDMLVILNDNEMSISENVGGLNNHLARIFSGSIYSSLRDSSKKILDTMPPIKNFMKKTEEHMKGVISPISTLFEELGFNYIGPIDGHNIEELIATLSNMKTLKGPQFLHIRTKKGKGYTPAEQDPIGFHGVPKFDYHTGQLPKSTATPTYSQIFGEWLCETAEQDEKLIGITPAMREGSGMVEFSNRFPDQYFDVAIAEQHAVTLAAGLAIGGYKPVVAIYSTFLQRAYDQVIHDVAIQNLPVLFAIDRAGIVGADGPTHQGAFDLSFLRCIPNLIIMAPSNENECRLMLHTGYCCGKPAAVRYPRGNAIGVELEPLRKLEIGKSNLVRQGQDIAILNFGTLLPNALDVAEKLNATVVDMRFVKPLDHERINELAKTHRTLVTLEENTIQGGAGSAVSEVVNIQQHHVNILHLGLPDEFVAQGTQQEVLKELKLDATGIEEQIKNFLRIA</sequence>
<reference key="1">
    <citation type="journal article" date="2004" name="Nat. Biotechnol.">
        <title>The genome sequence of the capnophilic rumen bacterium Mannheimia succiniciproducens.</title>
        <authorList>
            <person name="Hong S.H."/>
            <person name="Kim J.S."/>
            <person name="Lee S.Y."/>
            <person name="In Y.H."/>
            <person name="Choi S.S."/>
            <person name="Rih J.-K."/>
            <person name="Kim C.H."/>
            <person name="Jeong H."/>
            <person name="Hur C.G."/>
            <person name="Kim J.J."/>
        </authorList>
    </citation>
    <scope>NUCLEOTIDE SEQUENCE [LARGE SCALE GENOMIC DNA]</scope>
    <source>
        <strain>KCTC 0769BP / MBEL55E</strain>
    </source>
</reference>
<feature type="chain" id="PRO_0000256435" description="1-deoxy-D-xylulose-5-phosphate synthase">
    <location>
        <begin position="1"/>
        <end position="617"/>
    </location>
</feature>
<feature type="binding site" evidence="1">
    <location>
        <position position="76"/>
    </location>
    <ligand>
        <name>thiamine diphosphate</name>
        <dbReference type="ChEBI" id="CHEBI:58937"/>
    </ligand>
</feature>
<feature type="binding site" evidence="1">
    <location>
        <begin position="117"/>
        <end position="119"/>
    </location>
    <ligand>
        <name>thiamine diphosphate</name>
        <dbReference type="ChEBI" id="CHEBI:58937"/>
    </ligand>
</feature>
<feature type="binding site" evidence="1">
    <location>
        <position position="148"/>
    </location>
    <ligand>
        <name>Mg(2+)</name>
        <dbReference type="ChEBI" id="CHEBI:18420"/>
    </ligand>
</feature>
<feature type="binding site" evidence="1">
    <location>
        <begin position="149"/>
        <end position="150"/>
    </location>
    <ligand>
        <name>thiamine diphosphate</name>
        <dbReference type="ChEBI" id="CHEBI:58937"/>
    </ligand>
</feature>
<feature type="binding site" evidence="1">
    <location>
        <position position="177"/>
    </location>
    <ligand>
        <name>Mg(2+)</name>
        <dbReference type="ChEBI" id="CHEBI:18420"/>
    </ligand>
</feature>
<feature type="binding site" evidence="1">
    <location>
        <position position="177"/>
    </location>
    <ligand>
        <name>thiamine diphosphate</name>
        <dbReference type="ChEBI" id="CHEBI:58937"/>
    </ligand>
</feature>
<feature type="binding site" evidence="1">
    <location>
        <position position="285"/>
    </location>
    <ligand>
        <name>thiamine diphosphate</name>
        <dbReference type="ChEBI" id="CHEBI:58937"/>
    </ligand>
</feature>
<feature type="binding site" evidence="1">
    <location>
        <position position="366"/>
    </location>
    <ligand>
        <name>thiamine diphosphate</name>
        <dbReference type="ChEBI" id="CHEBI:58937"/>
    </ligand>
</feature>
<accession>Q65TP4</accession>
<organism>
    <name type="scientific">Mannheimia succiniciproducens (strain KCTC 0769BP / MBEL55E)</name>
    <dbReference type="NCBI Taxonomy" id="221988"/>
    <lineage>
        <taxon>Bacteria</taxon>
        <taxon>Pseudomonadati</taxon>
        <taxon>Pseudomonadota</taxon>
        <taxon>Gammaproteobacteria</taxon>
        <taxon>Pasteurellales</taxon>
        <taxon>Pasteurellaceae</taxon>
        <taxon>Basfia</taxon>
    </lineage>
</organism>
<gene>
    <name evidence="1" type="primary">dxs</name>
    <name type="ordered locus">MS1059</name>
</gene>
<protein>
    <recommendedName>
        <fullName evidence="1">1-deoxy-D-xylulose-5-phosphate synthase</fullName>
        <ecNumber evidence="1">2.2.1.7</ecNumber>
    </recommendedName>
    <alternativeName>
        <fullName evidence="1">1-deoxyxylulose-5-phosphate synthase</fullName>
        <shortName evidence="1">DXP synthase</shortName>
        <shortName evidence="1">DXPS</shortName>
    </alternativeName>
</protein>
<keyword id="KW-0414">Isoprene biosynthesis</keyword>
<keyword id="KW-0460">Magnesium</keyword>
<keyword id="KW-0479">Metal-binding</keyword>
<keyword id="KW-0784">Thiamine biosynthesis</keyword>
<keyword id="KW-0786">Thiamine pyrophosphate</keyword>
<keyword id="KW-0808">Transferase</keyword>
<name>DXS_MANSM</name>
<comment type="function">
    <text evidence="1">Catalyzes the acyloin condensation reaction between C atoms 2 and 3 of pyruvate and glyceraldehyde 3-phosphate to yield 1-deoxy-D-xylulose-5-phosphate (DXP).</text>
</comment>
<comment type="catalytic activity">
    <reaction evidence="1">
        <text>D-glyceraldehyde 3-phosphate + pyruvate + H(+) = 1-deoxy-D-xylulose 5-phosphate + CO2</text>
        <dbReference type="Rhea" id="RHEA:12605"/>
        <dbReference type="ChEBI" id="CHEBI:15361"/>
        <dbReference type="ChEBI" id="CHEBI:15378"/>
        <dbReference type="ChEBI" id="CHEBI:16526"/>
        <dbReference type="ChEBI" id="CHEBI:57792"/>
        <dbReference type="ChEBI" id="CHEBI:59776"/>
        <dbReference type="EC" id="2.2.1.7"/>
    </reaction>
</comment>
<comment type="cofactor">
    <cofactor evidence="1">
        <name>Mg(2+)</name>
        <dbReference type="ChEBI" id="CHEBI:18420"/>
    </cofactor>
    <text evidence="1">Binds 1 Mg(2+) ion per subunit.</text>
</comment>
<comment type="cofactor">
    <cofactor evidence="1">
        <name>thiamine diphosphate</name>
        <dbReference type="ChEBI" id="CHEBI:58937"/>
    </cofactor>
    <text evidence="1">Binds 1 thiamine pyrophosphate per subunit.</text>
</comment>
<comment type="pathway">
    <text evidence="1">Metabolic intermediate biosynthesis; 1-deoxy-D-xylulose 5-phosphate biosynthesis; 1-deoxy-D-xylulose 5-phosphate from D-glyceraldehyde 3-phosphate and pyruvate: step 1/1.</text>
</comment>
<comment type="subunit">
    <text evidence="1">Homodimer.</text>
</comment>
<comment type="similarity">
    <text evidence="1">Belongs to the transketolase family. DXPS subfamily.</text>
</comment>
<dbReference type="EC" id="2.2.1.7" evidence="1"/>
<dbReference type="EMBL" id="AE016827">
    <property type="protein sequence ID" value="AAU37666.1"/>
    <property type="molecule type" value="Genomic_DNA"/>
</dbReference>
<dbReference type="RefSeq" id="WP_011200234.1">
    <property type="nucleotide sequence ID" value="NC_006300.1"/>
</dbReference>
<dbReference type="SMR" id="Q65TP4"/>
<dbReference type="STRING" id="221988.MS1059"/>
<dbReference type="KEGG" id="msu:MS1059"/>
<dbReference type="eggNOG" id="COG1154">
    <property type="taxonomic scope" value="Bacteria"/>
</dbReference>
<dbReference type="HOGENOM" id="CLU_009227_1_4_6"/>
<dbReference type="OrthoDB" id="9803371at2"/>
<dbReference type="UniPathway" id="UPA00064">
    <property type="reaction ID" value="UER00091"/>
</dbReference>
<dbReference type="Proteomes" id="UP000000607">
    <property type="component" value="Chromosome"/>
</dbReference>
<dbReference type="GO" id="GO:0005829">
    <property type="term" value="C:cytosol"/>
    <property type="evidence" value="ECO:0007669"/>
    <property type="project" value="TreeGrafter"/>
</dbReference>
<dbReference type="GO" id="GO:0008661">
    <property type="term" value="F:1-deoxy-D-xylulose-5-phosphate synthase activity"/>
    <property type="evidence" value="ECO:0007669"/>
    <property type="project" value="UniProtKB-UniRule"/>
</dbReference>
<dbReference type="GO" id="GO:0000287">
    <property type="term" value="F:magnesium ion binding"/>
    <property type="evidence" value="ECO:0007669"/>
    <property type="project" value="UniProtKB-UniRule"/>
</dbReference>
<dbReference type="GO" id="GO:0030976">
    <property type="term" value="F:thiamine pyrophosphate binding"/>
    <property type="evidence" value="ECO:0007669"/>
    <property type="project" value="UniProtKB-UniRule"/>
</dbReference>
<dbReference type="GO" id="GO:0052865">
    <property type="term" value="P:1-deoxy-D-xylulose 5-phosphate biosynthetic process"/>
    <property type="evidence" value="ECO:0007669"/>
    <property type="project" value="UniProtKB-UniPathway"/>
</dbReference>
<dbReference type="GO" id="GO:0019288">
    <property type="term" value="P:isopentenyl diphosphate biosynthetic process, methylerythritol 4-phosphate pathway"/>
    <property type="evidence" value="ECO:0007669"/>
    <property type="project" value="TreeGrafter"/>
</dbReference>
<dbReference type="GO" id="GO:0016114">
    <property type="term" value="P:terpenoid biosynthetic process"/>
    <property type="evidence" value="ECO:0007669"/>
    <property type="project" value="UniProtKB-UniRule"/>
</dbReference>
<dbReference type="GO" id="GO:0009228">
    <property type="term" value="P:thiamine biosynthetic process"/>
    <property type="evidence" value="ECO:0007669"/>
    <property type="project" value="UniProtKB-UniRule"/>
</dbReference>
<dbReference type="CDD" id="cd02007">
    <property type="entry name" value="TPP_DXS"/>
    <property type="match status" value="1"/>
</dbReference>
<dbReference type="CDD" id="cd07033">
    <property type="entry name" value="TPP_PYR_DXS_TK_like"/>
    <property type="match status" value="1"/>
</dbReference>
<dbReference type="FunFam" id="3.40.50.920:FF:000002">
    <property type="entry name" value="1-deoxy-D-xylulose-5-phosphate synthase"/>
    <property type="match status" value="1"/>
</dbReference>
<dbReference type="FunFam" id="3.40.50.970:FF:000005">
    <property type="entry name" value="1-deoxy-D-xylulose-5-phosphate synthase"/>
    <property type="match status" value="1"/>
</dbReference>
<dbReference type="Gene3D" id="3.40.50.920">
    <property type="match status" value="1"/>
</dbReference>
<dbReference type="Gene3D" id="3.40.50.970">
    <property type="match status" value="2"/>
</dbReference>
<dbReference type="HAMAP" id="MF_00315">
    <property type="entry name" value="DXP_synth"/>
    <property type="match status" value="1"/>
</dbReference>
<dbReference type="InterPro" id="IPR005477">
    <property type="entry name" value="Dxylulose-5-P_synthase"/>
</dbReference>
<dbReference type="InterPro" id="IPR029061">
    <property type="entry name" value="THDP-binding"/>
</dbReference>
<dbReference type="InterPro" id="IPR009014">
    <property type="entry name" value="Transketo_C/PFOR_II"/>
</dbReference>
<dbReference type="InterPro" id="IPR005475">
    <property type="entry name" value="Transketolase-like_Pyr-bd"/>
</dbReference>
<dbReference type="InterPro" id="IPR020826">
    <property type="entry name" value="Transketolase_BS"/>
</dbReference>
<dbReference type="InterPro" id="IPR033248">
    <property type="entry name" value="Transketolase_C"/>
</dbReference>
<dbReference type="InterPro" id="IPR049557">
    <property type="entry name" value="Transketolase_CS"/>
</dbReference>
<dbReference type="NCBIfam" id="TIGR00204">
    <property type="entry name" value="dxs"/>
    <property type="match status" value="1"/>
</dbReference>
<dbReference type="NCBIfam" id="NF003933">
    <property type="entry name" value="PRK05444.2-2"/>
    <property type="match status" value="1"/>
</dbReference>
<dbReference type="PANTHER" id="PTHR43322">
    <property type="entry name" value="1-D-DEOXYXYLULOSE 5-PHOSPHATE SYNTHASE-RELATED"/>
    <property type="match status" value="1"/>
</dbReference>
<dbReference type="PANTHER" id="PTHR43322:SF5">
    <property type="entry name" value="1-DEOXY-D-XYLULOSE-5-PHOSPHATE SYNTHASE, CHLOROPLASTIC"/>
    <property type="match status" value="1"/>
</dbReference>
<dbReference type="Pfam" id="PF13292">
    <property type="entry name" value="DXP_synthase_N"/>
    <property type="match status" value="1"/>
</dbReference>
<dbReference type="Pfam" id="PF02779">
    <property type="entry name" value="Transket_pyr"/>
    <property type="match status" value="1"/>
</dbReference>
<dbReference type="Pfam" id="PF02780">
    <property type="entry name" value="Transketolase_C"/>
    <property type="match status" value="1"/>
</dbReference>
<dbReference type="SMART" id="SM00861">
    <property type="entry name" value="Transket_pyr"/>
    <property type="match status" value="1"/>
</dbReference>
<dbReference type="SUPFAM" id="SSF52518">
    <property type="entry name" value="Thiamin diphosphate-binding fold (THDP-binding)"/>
    <property type="match status" value="2"/>
</dbReference>
<dbReference type="SUPFAM" id="SSF52922">
    <property type="entry name" value="TK C-terminal domain-like"/>
    <property type="match status" value="1"/>
</dbReference>
<dbReference type="PROSITE" id="PS00801">
    <property type="entry name" value="TRANSKETOLASE_1"/>
    <property type="match status" value="1"/>
</dbReference>
<dbReference type="PROSITE" id="PS00802">
    <property type="entry name" value="TRANSKETOLASE_2"/>
    <property type="match status" value="1"/>
</dbReference>
<proteinExistence type="inferred from homology"/>